<gene>
    <name evidence="1" type="primary">flgH</name>
    <name type="ordered locus">Pput_1471</name>
</gene>
<accession>A5W0G8</accession>
<reference key="1">
    <citation type="submission" date="2007-05" db="EMBL/GenBank/DDBJ databases">
        <title>Complete sequence of Pseudomonas putida F1.</title>
        <authorList>
            <consortium name="US DOE Joint Genome Institute"/>
            <person name="Copeland A."/>
            <person name="Lucas S."/>
            <person name="Lapidus A."/>
            <person name="Barry K."/>
            <person name="Detter J.C."/>
            <person name="Glavina del Rio T."/>
            <person name="Hammon N."/>
            <person name="Israni S."/>
            <person name="Dalin E."/>
            <person name="Tice H."/>
            <person name="Pitluck S."/>
            <person name="Chain P."/>
            <person name="Malfatti S."/>
            <person name="Shin M."/>
            <person name="Vergez L."/>
            <person name="Schmutz J."/>
            <person name="Larimer F."/>
            <person name="Land M."/>
            <person name="Hauser L."/>
            <person name="Kyrpides N."/>
            <person name="Lykidis A."/>
            <person name="Parales R."/>
            <person name="Richardson P."/>
        </authorList>
    </citation>
    <scope>NUCLEOTIDE SEQUENCE [LARGE SCALE GENOMIC DNA]</scope>
    <source>
        <strain>ATCC 700007 / DSM 6899 / JCM 31910 / BCRC 17059 / LMG 24140 / F1</strain>
    </source>
</reference>
<dbReference type="EMBL" id="CP000712">
    <property type="protein sequence ID" value="ABQ77628.1"/>
    <property type="molecule type" value="Genomic_DNA"/>
</dbReference>
<dbReference type="SMR" id="A5W0G8"/>
<dbReference type="KEGG" id="ppf:Pput_1471"/>
<dbReference type="eggNOG" id="COG2063">
    <property type="taxonomic scope" value="Bacteria"/>
</dbReference>
<dbReference type="HOGENOM" id="CLU_069313_0_2_6"/>
<dbReference type="GO" id="GO:0009427">
    <property type="term" value="C:bacterial-type flagellum basal body, distal rod, L ring"/>
    <property type="evidence" value="ECO:0007669"/>
    <property type="project" value="InterPro"/>
</dbReference>
<dbReference type="GO" id="GO:0009279">
    <property type="term" value="C:cell outer membrane"/>
    <property type="evidence" value="ECO:0007669"/>
    <property type="project" value="UniProtKB-SubCell"/>
</dbReference>
<dbReference type="GO" id="GO:0003774">
    <property type="term" value="F:cytoskeletal motor activity"/>
    <property type="evidence" value="ECO:0007669"/>
    <property type="project" value="InterPro"/>
</dbReference>
<dbReference type="GO" id="GO:0071973">
    <property type="term" value="P:bacterial-type flagellum-dependent cell motility"/>
    <property type="evidence" value="ECO:0007669"/>
    <property type="project" value="InterPro"/>
</dbReference>
<dbReference type="HAMAP" id="MF_00415">
    <property type="entry name" value="FlgH"/>
    <property type="match status" value="1"/>
</dbReference>
<dbReference type="InterPro" id="IPR000527">
    <property type="entry name" value="Flag_Lring"/>
</dbReference>
<dbReference type="NCBIfam" id="NF001304">
    <property type="entry name" value="PRK00249.1-4"/>
    <property type="match status" value="1"/>
</dbReference>
<dbReference type="PANTHER" id="PTHR34933">
    <property type="entry name" value="FLAGELLAR L-RING PROTEIN"/>
    <property type="match status" value="1"/>
</dbReference>
<dbReference type="PANTHER" id="PTHR34933:SF1">
    <property type="entry name" value="FLAGELLAR L-RING PROTEIN"/>
    <property type="match status" value="1"/>
</dbReference>
<dbReference type="Pfam" id="PF02107">
    <property type="entry name" value="FlgH"/>
    <property type="match status" value="1"/>
</dbReference>
<dbReference type="PRINTS" id="PR01008">
    <property type="entry name" value="FLGLRINGFLGH"/>
</dbReference>
<dbReference type="PROSITE" id="PS51257">
    <property type="entry name" value="PROKAR_LIPOPROTEIN"/>
    <property type="match status" value="1"/>
</dbReference>
<proteinExistence type="inferred from homology"/>
<organism>
    <name type="scientific">Pseudomonas putida (strain ATCC 700007 / DSM 6899 / JCM 31910 / BCRC 17059 / LMG 24140 / F1)</name>
    <dbReference type="NCBI Taxonomy" id="351746"/>
    <lineage>
        <taxon>Bacteria</taxon>
        <taxon>Pseudomonadati</taxon>
        <taxon>Pseudomonadota</taxon>
        <taxon>Gammaproteobacteria</taxon>
        <taxon>Pseudomonadales</taxon>
        <taxon>Pseudomonadaceae</taxon>
        <taxon>Pseudomonas</taxon>
    </lineage>
</organism>
<name>FLGH_PSEP1</name>
<protein>
    <recommendedName>
        <fullName evidence="1">Flagellar L-ring protein</fullName>
    </recommendedName>
    <alternativeName>
        <fullName evidence="1">Basal body L-ring protein</fullName>
    </alternativeName>
</protein>
<evidence type="ECO:0000255" key="1">
    <source>
        <dbReference type="HAMAP-Rule" id="MF_00415"/>
    </source>
</evidence>
<keyword id="KW-0975">Bacterial flagellum</keyword>
<keyword id="KW-0998">Cell outer membrane</keyword>
<keyword id="KW-0449">Lipoprotein</keyword>
<keyword id="KW-0472">Membrane</keyword>
<keyword id="KW-0564">Palmitate</keyword>
<keyword id="KW-0732">Signal</keyword>
<comment type="function">
    <text evidence="1">Assembles around the rod to form the L-ring and probably protects the motor/basal body from shearing forces during rotation.</text>
</comment>
<comment type="subunit">
    <text evidence="1">The basal body constitutes a major portion of the flagellar organelle and consists of four rings (L,P,S, and M) mounted on a central rod.</text>
</comment>
<comment type="subcellular location">
    <subcellularLocation>
        <location evidence="1">Cell outer membrane</location>
        <topology evidence="1">Lipid-anchor</topology>
    </subcellularLocation>
    <subcellularLocation>
        <location evidence="1">Bacterial flagellum basal body</location>
    </subcellularLocation>
</comment>
<comment type="similarity">
    <text evidence="1">Belongs to the FlgH family.</text>
</comment>
<feature type="signal peptide" evidence="1">
    <location>
        <begin position="1"/>
        <end position="18"/>
    </location>
</feature>
<feature type="chain" id="PRO_1000050095" description="Flagellar L-ring protein">
    <location>
        <begin position="19"/>
        <end position="231"/>
    </location>
</feature>
<feature type="lipid moiety-binding region" description="N-palmitoyl cysteine" evidence="1">
    <location>
        <position position="19"/>
    </location>
</feature>
<feature type="lipid moiety-binding region" description="S-diacylglycerol cysteine" evidence="1">
    <location>
        <position position="19"/>
    </location>
</feature>
<sequence>MNRLLSVFALGGAVLLAGCVAPTPKPNDPYYAPVLPRTPLPAAANNGSIYQAGFEQNLYSDRKAFRVGDIITITLNERTSASKNAGSQIAKTSKTDIGLTSLFGTTPNTNNPFGGGDLSLEAGYSGDRATKGDSKATQGNTLTGSITVTVAEVLPNGIIAVRGEKWLTLNTGEELVRIAGMIRADDIATDNTVPSTRVADARITYSGTGSFADASQPGWLDRFFISPLWPF</sequence>